<dbReference type="EC" id="3.4.23.43" evidence="1"/>
<dbReference type="EC" id="2.1.1.-" evidence="1"/>
<dbReference type="EMBL" id="AF059249">
    <property type="protein sequence ID" value="AAC23569.1"/>
    <property type="molecule type" value="Genomic_DNA"/>
</dbReference>
<dbReference type="RefSeq" id="WP_005314162.1">
    <property type="nucleotide sequence ID" value="NZ_UFSF01000001.1"/>
</dbReference>
<dbReference type="STRING" id="1233098.GCA_000315855_03754"/>
<dbReference type="MEROPS" id="A24.001"/>
<dbReference type="OMA" id="GAWGGWQ"/>
<dbReference type="GO" id="GO:0005886">
    <property type="term" value="C:plasma membrane"/>
    <property type="evidence" value="ECO:0007669"/>
    <property type="project" value="UniProtKB-SubCell"/>
</dbReference>
<dbReference type="GO" id="GO:0004190">
    <property type="term" value="F:aspartic-type endopeptidase activity"/>
    <property type="evidence" value="ECO:0007669"/>
    <property type="project" value="UniProtKB-EC"/>
</dbReference>
<dbReference type="GO" id="GO:0046872">
    <property type="term" value="F:metal ion binding"/>
    <property type="evidence" value="ECO:0007669"/>
    <property type="project" value="UniProtKB-KW"/>
</dbReference>
<dbReference type="GO" id="GO:0008168">
    <property type="term" value="F:methyltransferase activity"/>
    <property type="evidence" value="ECO:0007669"/>
    <property type="project" value="UniProtKB-KW"/>
</dbReference>
<dbReference type="GO" id="GO:0032259">
    <property type="term" value="P:methylation"/>
    <property type="evidence" value="ECO:0007669"/>
    <property type="project" value="UniProtKB-KW"/>
</dbReference>
<dbReference type="GO" id="GO:0006465">
    <property type="term" value="P:signal peptide processing"/>
    <property type="evidence" value="ECO:0007669"/>
    <property type="project" value="TreeGrafter"/>
</dbReference>
<dbReference type="FunFam" id="1.20.120.1220:FF:000001">
    <property type="entry name" value="Type 4 prepilin-like proteins leader peptide-processing enzyme"/>
    <property type="match status" value="1"/>
</dbReference>
<dbReference type="Gene3D" id="1.20.120.1220">
    <property type="match status" value="1"/>
</dbReference>
<dbReference type="InterPro" id="IPR014032">
    <property type="entry name" value="Peptidase_A24A_bac"/>
</dbReference>
<dbReference type="InterPro" id="IPR000045">
    <property type="entry name" value="Prepilin_IV_endopep_pep"/>
</dbReference>
<dbReference type="InterPro" id="IPR010627">
    <property type="entry name" value="Prepilin_pept_A24_N"/>
</dbReference>
<dbReference type="InterPro" id="IPR050882">
    <property type="entry name" value="Prepilin_peptidase/N-MTase"/>
</dbReference>
<dbReference type="PANTHER" id="PTHR30487:SF0">
    <property type="entry name" value="PREPILIN LEADER PEPTIDASE_N-METHYLTRANSFERASE-RELATED"/>
    <property type="match status" value="1"/>
</dbReference>
<dbReference type="PANTHER" id="PTHR30487">
    <property type="entry name" value="TYPE 4 PREPILIN-LIKE PROTEINS LEADER PEPTIDE-PROCESSING ENZYME"/>
    <property type="match status" value="1"/>
</dbReference>
<dbReference type="Pfam" id="PF06750">
    <property type="entry name" value="A24_N_bact"/>
    <property type="match status" value="1"/>
</dbReference>
<dbReference type="Pfam" id="PF01478">
    <property type="entry name" value="Peptidase_A24"/>
    <property type="match status" value="1"/>
</dbReference>
<dbReference type="PRINTS" id="PR00864">
    <property type="entry name" value="PREPILNPTASE"/>
</dbReference>
<feature type="chain" id="PRO_0000192615" description="Prepilin leader peptidase/N-methyltransferase">
    <location>
        <begin position="1"/>
        <end position="291"/>
    </location>
</feature>
<feature type="transmembrane region" description="Helical" evidence="2">
    <location>
        <begin position="14"/>
        <end position="34"/>
    </location>
</feature>
<feature type="transmembrane region" description="Helical" evidence="2">
    <location>
        <begin position="107"/>
        <end position="127"/>
    </location>
</feature>
<feature type="transmembrane region" description="Helical" evidence="2">
    <location>
        <begin position="131"/>
        <end position="151"/>
    </location>
</feature>
<feature type="transmembrane region" description="Helical" evidence="2">
    <location>
        <begin position="162"/>
        <end position="182"/>
    </location>
</feature>
<feature type="transmembrane region" description="Helical" evidence="2">
    <location>
        <begin position="186"/>
        <end position="206"/>
    </location>
</feature>
<feature type="transmembrane region" description="Helical" evidence="2">
    <location>
        <begin position="232"/>
        <end position="252"/>
    </location>
</feature>
<feature type="transmembrane region" description="Helical" evidence="2">
    <location>
        <begin position="262"/>
        <end position="282"/>
    </location>
</feature>
<feature type="binding site" evidence="1">
    <location>
        <position position="75"/>
    </location>
    <ligand>
        <name>Zn(2+)</name>
        <dbReference type="ChEBI" id="CHEBI:29105"/>
    </ligand>
</feature>
<feature type="binding site" evidence="1">
    <location>
        <position position="78"/>
    </location>
    <ligand>
        <name>Zn(2+)</name>
        <dbReference type="ChEBI" id="CHEBI:29105"/>
    </ligand>
</feature>
<feature type="binding site" evidence="1">
    <location>
        <position position="100"/>
    </location>
    <ligand>
        <name>Zn(2+)</name>
        <dbReference type="ChEBI" id="CHEBI:29105"/>
    </ligand>
</feature>
<feature type="binding site" evidence="1">
    <location>
        <position position="103"/>
    </location>
    <ligand>
        <name>Zn(2+)</name>
        <dbReference type="ChEBI" id="CHEBI:29105"/>
    </ligand>
</feature>
<accession>P0C423</accession>
<accession>O54483</accession>
<accession>O68964</accession>
<name>LEP4_AERSA</name>
<gene>
    <name type="primary">tapD</name>
    <name type="synonym">pilD</name>
</gene>
<reference key="1">
    <citation type="submission" date="1998-04" db="EMBL/GenBank/DDBJ databases">
        <title>Aeromonas salmonicida type IV prepilin peptidase and type IV pilus assembly genes.</title>
        <authorList>
            <person name="Pepe C.M."/>
            <person name="Strom M.S."/>
        </authorList>
    </citation>
    <scope>NUCLEOTIDE SEQUENCE [GENOMIC DNA]</scope>
    <source>
        <strain>A450</strain>
    </source>
</reference>
<organism>
    <name type="scientific">Aeromonas salmonicida</name>
    <dbReference type="NCBI Taxonomy" id="645"/>
    <lineage>
        <taxon>Bacteria</taxon>
        <taxon>Pseudomonadati</taxon>
        <taxon>Pseudomonadota</taxon>
        <taxon>Gammaproteobacteria</taxon>
        <taxon>Aeromonadales</taxon>
        <taxon>Aeromonadaceae</taxon>
        <taxon>Aeromonas</taxon>
    </lineage>
</organism>
<protein>
    <recommendedName>
        <fullName>Prepilin leader peptidase/N-methyltransferase</fullName>
    </recommendedName>
    <domain>
        <recommendedName>
            <fullName>Leader peptidase</fullName>
            <ecNumber evidence="1">3.4.23.43</ecNumber>
        </recommendedName>
        <alternativeName>
            <fullName>Prepilin peptidase</fullName>
        </alternativeName>
    </domain>
    <domain>
        <recommendedName>
            <fullName>N-methyltransferase</fullName>
            <ecNumber evidence="1">2.1.1.-</ecNumber>
        </recommendedName>
    </domain>
</protein>
<sequence>MTLLLELAHGLPWLYFSLVFLFSLMIGSFLNVVIHRLPIMLEREWQAEYRSYFSSDTPQPEDDERYNLMVPRSCCPRCNHPITALENIPLLSWLWLKGRCRGCQAAISARYPLVELLTALLSVVVAMTLTPGWGTLAALLLTWVLVALTFIDLDKMLLPDQLTLPLLWGGLLFNLLGGYVPLGDAVIGAMAGYLVLWSLYWAFKLLTGKEGMGYGDFKLLAALGAWLGWQALPIVLLLSSLVGAIFGIGLILLRNHHQSKPIPFGPYLAIAGWIALLWGDSITRWYLSTIL</sequence>
<proteinExistence type="inferred from homology"/>
<keyword id="KW-0997">Cell inner membrane</keyword>
<keyword id="KW-1003">Cell membrane</keyword>
<keyword id="KW-0378">Hydrolase</keyword>
<keyword id="KW-0472">Membrane</keyword>
<keyword id="KW-0479">Metal-binding</keyword>
<keyword id="KW-0489">Methyltransferase</keyword>
<keyword id="KW-0511">Multifunctional enzyme</keyword>
<keyword id="KW-0645">Protease</keyword>
<keyword id="KW-0949">S-adenosyl-L-methionine</keyword>
<keyword id="KW-0808">Transferase</keyword>
<keyword id="KW-0812">Transmembrane</keyword>
<keyword id="KW-1133">Transmembrane helix</keyword>
<keyword id="KW-0862">Zinc</keyword>
<comment type="function">
    <text evidence="1">Plays an essential role in type IV pili and type II pseudopili formation by proteolytically removing the leader sequence from substrate proteins and subsequently monomethylating the alpha-amino group of the newly exposed N-terminal phenylalanine.</text>
</comment>
<comment type="catalytic activity">
    <reaction evidence="1">
        <text>Typically cleaves a -Gly-|-Phe- bond to release an N-terminal, basic peptide of 5-8 residues from type IV prepilin, and then N-methylates the new N-terminal amino group, the methyl donor being S-adenosyl-L-methionine.</text>
        <dbReference type="EC" id="3.4.23.43"/>
    </reaction>
</comment>
<comment type="cofactor">
    <cofactor evidence="1">
        <name>Zn(2+)</name>
        <dbReference type="ChEBI" id="CHEBI:29105"/>
    </cofactor>
    <text evidence="1">Zinc is required for the N-terminal methylation of the mature pilin, but not for signal peptide cleavage.</text>
</comment>
<comment type="subcellular location">
    <subcellularLocation>
        <location evidence="1">Cell inner membrane</location>
        <topology evidence="1">Multi-pass membrane protein</topology>
    </subcellularLocation>
</comment>
<comment type="similarity">
    <text evidence="3">Belongs to the peptidase A24 family.</text>
</comment>
<evidence type="ECO:0000250" key="1">
    <source>
        <dbReference type="UniProtKB" id="P22610"/>
    </source>
</evidence>
<evidence type="ECO:0000255" key="2"/>
<evidence type="ECO:0000305" key="3"/>